<dbReference type="EC" id="3.1.3.83"/>
<dbReference type="EMBL" id="AF285636">
    <property type="protein sequence ID" value="AAK26470.1"/>
    <property type="molecule type" value="Genomic_DNA"/>
</dbReference>
<dbReference type="EMBL" id="CP000010">
    <property type="protein sequence ID" value="AAU49840.1"/>
    <property type="molecule type" value="Genomic_DNA"/>
</dbReference>
<dbReference type="RefSeq" id="WP_004194255.1">
    <property type="nucleotide sequence ID" value="NC_006348.1"/>
</dbReference>
<dbReference type="RefSeq" id="YP_103855.1">
    <property type="nucleotide sequence ID" value="NC_006348.1"/>
</dbReference>
<dbReference type="SMR" id="Q9AI34"/>
<dbReference type="GeneID" id="92979985"/>
<dbReference type="KEGG" id="bma:BMA2293"/>
<dbReference type="PATRIC" id="fig|243160.12.peg.2360"/>
<dbReference type="eggNOG" id="COG0241">
    <property type="taxonomic scope" value="Bacteria"/>
</dbReference>
<dbReference type="HOGENOM" id="CLU_085077_3_0_4"/>
<dbReference type="UniPathway" id="UPA00543">
    <property type="reaction ID" value="UER00607"/>
</dbReference>
<dbReference type="UniPathway" id="UPA00934"/>
<dbReference type="Proteomes" id="UP000006693">
    <property type="component" value="Chromosome 1"/>
</dbReference>
<dbReference type="GO" id="GO:0005737">
    <property type="term" value="C:cytoplasm"/>
    <property type="evidence" value="ECO:0007669"/>
    <property type="project" value="UniProtKB-SubCell"/>
</dbReference>
<dbReference type="GO" id="GO:0034200">
    <property type="term" value="F:D-glycero-beta-D-manno-heptose 1,7-bisphosphate 7-phosphatase activity"/>
    <property type="evidence" value="ECO:0000250"/>
    <property type="project" value="UniProtKB"/>
</dbReference>
<dbReference type="GO" id="GO:0000287">
    <property type="term" value="F:magnesium ion binding"/>
    <property type="evidence" value="ECO:0000250"/>
    <property type="project" value="UniProtKB"/>
</dbReference>
<dbReference type="GO" id="GO:0008270">
    <property type="term" value="F:zinc ion binding"/>
    <property type="evidence" value="ECO:0000250"/>
    <property type="project" value="UniProtKB"/>
</dbReference>
<dbReference type="GO" id="GO:0045227">
    <property type="term" value="P:capsule polysaccharide biosynthetic process"/>
    <property type="evidence" value="ECO:0007669"/>
    <property type="project" value="UniProtKB-UniPathway"/>
</dbReference>
<dbReference type="CDD" id="cd07503">
    <property type="entry name" value="HAD_HisB-N"/>
    <property type="match status" value="1"/>
</dbReference>
<dbReference type="FunFam" id="3.40.50.1000:FF:000037">
    <property type="entry name" value="D,D-heptose 1,7-bisphosphate phosphatase"/>
    <property type="match status" value="1"/>
</dbReference>
<dbReference type="Gene3D" id="3.40.50.1000">
    <property type="entry name" value="HAD superfamily/HAD-like"/>
    <property type="match status" value="1"/>
</dbReference>
<dbReference type="InterPro" id="IPR036412">
    <property type="entry name" value="HAD-like_sf"/>
</dbReference>
<dbReference type="InterPro" id="IPR006549">
    <property type="entry name" value="HAD-SF_hydro_IIIA"/>
</dbReference>
<dbReference type="InterPro" id="IPR023214">
    <property type="entry name" value="HAD_sf"/>
</dbReference>
<dbReference type="InterPro" id="IPR004446">
    <property type="entry name" value="Heptose_bisP_phosphatase"/>
</dbReference>
<dbReference type="InterPro" id="IPR006543">
    <property type="entry name" value="Histidinol-phos"/>
</dbReference>
<dbReference type="NCBIfam" id="TIGR00213">
    <property type="entry name" value="GmhB_yaeD"/>
    <property type="match status" value="1"/>
</dbReference>
<dbReference type="NCBIfam" id="TIGR01662">
    <property type="entry name" value="HAD-SF-IIIA"/>
    <property type="match status" value="1"/>
</dbReference>
<dbReference type="NCBIfam" id="TIGR01656">
    <property type="entry name" value="Histidinol-ppas"/>
    <property type="match status" value="1"/>
</dbReference>
<dbReference type="PANTHER" id="PTHR42891">
    <property type="entry name" value="D-GLYCERO-BETA-D-MANNO-HEPTOSE-1,7-BISPHOSPHATE 7-PHOSPHATASE"/>
    <property type="match status" value="1"/>
</dbReference>
<dbReference type="PANTHER" id="PTHR42891:SF1">
    <property type="entry name" value="D-GLYCERO-BETA-D-MANNO-HEPTOSE-1,7-BISPHOSPHATE 7-PHOSPHATASE"/>
    <property type="match status" value="1"/>
</dbReference>
<dbReference type="Pfam" id="PF13242">
    <property type="entry name" value="Hydrolase_like"/>
    <property type="match status" value="1"/>
</dbReference>
<dbReference type="PIRSF" id="PIRSF004682">
    <property type="entry name" value="GmhB"/>
    <property type="match status" value="1"/>
</dbReference>
<dbReference type="SUPFAM" id="SSF56784">
    <property type="entry name" value="HAD-like"/>
    <property type="match status" value="1"/>
</dbReference>
<protein>
    <recommendedName>
        <fullName>D-glycero-alpha-D-manno-heptose-1,7-bisphosphate 7-phosphatase</fullName>
        <ecNumber>3.1.3.83</ecNumber>
    </recommendedName>
    <alternativeName>
        <fullName>D,D-heptose 1,7-bisphosphate phosphatase</fullName>
        <shortName>HBP phosphatase</shortName>
    </alternativeName>
</protein>
<name>GMHBA_BURMA</name>
<evidence type="ECO:0000250" key="1"/>
<evidence type="ECO:0000305" key="2"/>
<accession>Q9AI34</accession>
<accession>Q62HG5</accession>
<organism>
    <name type="scientific">Burkholderia mallei (strain ATCC 23344)</name>
    <dbReference type="NCBI Taxonomy" id="243160"/>
    <lineage>
        <taxon>Bacteria</taxon>
        <taxon>Pseudomonadati</taxon>
        <taxon>Pseudomonadota</taxon>
        <taxon>Betaproteobacteria</taxon>
        <taxon>Burkholderiales</taxon>
        <taxon>Burkholderiaceae</taxon>
        <taxon>Burkholderia</taxon>
        <taxon>pseudomallei group</taxon>
    </lineage>
</organism>
<feature type="chain" id="PRO_0000209385" description="D-glycero-alpha-D-manno-heptose-1,7-bisphosphate 7-phosphatase">
    <location>
        <begin position="1"/>
        <end position="189"/>
    </location>
</feature>
<feature type="active site" description="Nucleophile" evidence="1">
    <location>
        <position position="9"/>
    </location>
</feature>
<feature type="active site" description="Proton donor" evidence="1">
    <location>
        <position position="11"/>
    </location>
</feature>
<feature type="binding site" evidence="1">
    <location>
        <begin position="9"/>
        <end position="11"/>
    </location>
    <ligand>
        <name>substrate</name>
    </ligand>
</feature>
<feature type="binding site" evidence="1">
    <location>
        <position position="9"/>
    </location>
    <ligand>
        <name>Mg(2+)</name>
        <dbReference type="ChEBI" id="CHEBI:18420"/>
    </ligand>
</feature>
<feature type="binding site" evidence="1">
    <location>
        <position position="11"/>
    </location>
    <ligand>
        <name>Mg(2+)</name>
        <dbReference type="ChEBI" id="CHEBI:18420"/>
    </ligand>
</feature>
<feature type="binding site" evidence="1">
    <location>
        <begin position="17"/>
        <end position="20"/>
    </location>
    <ligand>
        <name>substrate</name>
    </ligand>
</feature>
<feature type="binding site" evidence="1">
    <location>
        <begin position="51"/>
        <end position="54"/>
    </location>
    <ligand>
        <name>substrate</name>
    </ligand>
</feature>
<feature type="binding site" evidence="1">
    <location>
        <begin position="108"/>
        <end position="109"/>
    </location>
    <ligand>
        <name>substrate</name>
    </ligand>
</feature>
<feature type="binding site" evidence="1">
    <location>
        <position position="134"/>
    </location>
    <ligand>
        <name>Mg(2+)</name>
        <dbReference type="ChEBI" id="CHEBI:18420"/>
    </ligand>
</feature>
<feature type="binding site" evidence="1">
    <location>
        <position position="135"/>
    </location>
    <ligand>
        <name>Mg(2+)</name>
        <dbReference type="ChEBI" id="CHEBI:18420"/>
    </ligand>
</feature>
<feature type="binding site" evidence="1">
    <location>
        <position position="135"/>
    </location>
    <ligand>
        <name>substrate</name>
    </ligand>
</feature>
<feature type="site" description="Stabilizes the phosphoryl group" evidence="1">
    <location>
        <position position="51"/>
    </location>
</feature>
<feature type="site" description="Contributes to substrate recognition" evidence="1">
    <location>
        <position position="108"/>
    </location>
</feature>
<feature type="site" description="Stabilizes the phosphoryl group" evidence="1">
    <location>
        <position position="109"/>
    </location>
</feature>
<sequence length="189" mass="20428">MKNRALFLDRDGVINRDDGYVFEIEKFVFLDGIFELAGAAKALGYLSIVVTNQAGIGRGYYSEDDFFRLSDWMKGVFATEGAPIDGVYFCPTHPEHGIGRYKVESRFRKPNPGMILAAQHDFDLDLGASLLVGDKESDIQAGSTAGVGTTLLICDRDASRVATAASAVVRNPRDVIPFLTGPGPDAGSF</sequence>
<comment type="function">
    <text evidence="1">Converts the D-glycero-alpha-D-manno-heptose 1,7-bisphosphate intermediate into D-glycero-alpha-D-manno-heptose 1-phosphate by removing the phosphate group at the C-7 position.</text>
</comment>
<comment type="catalytic activity">
    <reaction>
        <text>D-glycero-alpha-D-manno-heptose 1,7-bisphosphate + H2O = D-glycero-alpha-D-manno-heptose 1-phosphate + phosphate</text>
        <dbReference type="Rhea" id="RHEA:28522"/>
        <dbReference type="ChEBI" id="CHEBI:15377"/>
        <dbReference type="ChEBI" id="CHEBI:43474"/>
        <dbReference type="ChEBI" id="CHEBI:60207"/>
        <dbReference type="ChEBI" id="CHEBI:61574"/>
        <dbReference type="EC" id="3.1.3.83"/>
    </reaction>
</comment>
<comment type="cofactor">
    <cofactor evidence="1">
        <name>Mg(2+)</name>
        <dbReference type="ChEBI" id="CHEBI:18420"/>
    </cofactor>
</comment>
<comment type="cofactor">
    <cofactor evidence="1">
        <name>Zn(2+)</name>
        <dbReference type="ChEBI" id="CHEBI:29105"/>
    </cofactor>
</comment>
<comment type="pathway">
    <text>Nucleotide-sugar biosynthesis; GDP-D-glycero-alpha-D-manno-heptose biosynthesis; GDP-D-glycero-alpha-D-manno-heptose from D-glycero-alpha-D-manno-heptose 7-phosphate: step 2/3.</text>
</comment>
<comment type="pathway">
    <text>Capsule biogenesis; capsule polysaccharide biosynthesis.</text>
</comment>
<comment type="subunit">
    <text evidence="1">Monomer.</text>
</comment>
<comment type="subcellular location">
    <subcellularLocation>
        <location evidence="1">Cytoplasm</location>
    </subcellularLocation>
</comment>
<comment type="similarity">
    <text evidence="2">Belongs to the GmhB family.</text>
</comment>
<proteinExistence type="inferred from homology"/>
<gene>
    <name type="primary">gmhB</name>
    <name type="synonym">wcbN</name>
    <name type="ordered locus">BMA2293</name>
</gene>
<reference key="1">
    <citation type="journal article" date="2001" name="Microb. Pathog.">
        <title>Identification of a Burkholderia mallei polysaccharide gene cluster by subtractive hybridization and demonstration that the encoded capsule is an essential virulence determinant.</title>
        <authorList>
            <person name="DeShazer D."/>
            <person name="Waag D.M."/>
            <person name="Fritz D.L."/>
            <person name="Woods D.E."/>
        </authorList>
    </citation>
    <scope>NUCLEOTIDE SEQUENCE [GENOMIC DNA]</scope>
    <source>
        <strain>ATCC 23344</strain>
    </source>
</reference>
<reference key="2">
    <citation type="journal article" date="2004" name="Proc. Natl. Acad. Sci. U.S.A.">
        <title>Structural flexibility in the Burkholderia mallei genome.</title>
        <authorList>
            <person name="Nierman W.C."/>
            <person name="DeShazer D."/>
            <person name="Kim H.S."/>
            <person name="Tettelin H."/>
            <person name="Nelson K.E."/>
            <person name="Feldblyum T.V."/>
            <person name="Ulrich R.L."/>
            <person name="Ronning C.M."/>
            <person name="Brinkac L.M."/>
            <person name="Daugherty S.C."/>
            <person name="Davidsen T.D."/>
            <person name="DeBoy R.T."/>
            <person name="Dimitrov G."/>
            <person name="Dodson R.J."/>
            <person name="Durkin A.S."/>
            <person name="Gwinn M.L."/>
            <person name="Haft D.H."/>
            <person name="Khouri H.M."/>
            <person name="Kolonay J.F."/>
            <person name="Madupu R."/>
            <person name="Mohammoud Y."/>
            <person name="Nelson W.C."/>
            <person name="Radune D."/>
            <person name="Romero C.M."/>
            <person name="Sarria S."/>
            <person name="Selengut J."/>
            <person name="Shamblin C."/>
            <person name="Sullivan S.A."/>
            <person name="White O."/>
            <person name="Yu Y."/>
            <person name="Zafar N."/>
            <person name="Zhou L."/>
            <person name="Fraser C.M."/>
        </authorList>
    </citation>
    <scope>NUCLEOTIDE SEQUENCE [LARGE SCALE GENOMIC DNA]</scope>
    <source>
        <strain>ATCC 23344</strain>
    </source>
</reference>
<reference key="3">
    <citation type="journal article" date="2002" name="Microbiology">
        <title>Novel pathways for biosynthesis of nucleotide-activated glycero-manno-heptose precursors of bacterial glycoproteins and cell surface polysaccharides.</title>
        <authorList>
            <person name="Valvano M.A."/>
            <person name="Messner P."/>
            <person name="Kosma P."/>
        </authorList>
    </citation>
    <scope>BIOSYNTHESIS OF NUCLEOTIDE-ACTIVATED GLYCERO-MANNO-HEPTOSE</scope>
</reference>
<keyword id="KW-0972">Capsule biogenesis/degradation</keyword>
<keyword id="KW-0119">Carbohydrate metabolism</keyword>
<keyword id="KW-0963">Cytoplasm</keyword>
<keyword id="KW-0378">Hydrolase</keyword>
<keyword id="KW-0460">Magnesium</keyword>
<keyword id="KW-0479">Metal-binding</keyword>
<keyword id="KW-1185">Reference proteome</keyword>
<keyword id="KW-0862">Zinc</keyword>